<name>RL20_LEPBP</name>
<feature type="chain" id="PRO_1000122332" description="Large ribosomal subunit protein bL20">
    <location>
        <begin position="1"/>
        <end position="117"/>
    </location>
</feature>
<evidence type="ECO:0000255" key="1">
    <source>
        <dbReference type="HAMAP-Rule" id="MF_00382"/>
    </source>
</evidence>
<evidence type="ECO:0000305" key="2"/>
<accession>B0SKZ5</accession>
<organism>
    <name type="scientific">Leptospira biflexa serovar Patoc (strain Patoc 1 / ATCC 23582 / Paris)</name>
    <dbReference type="NCBI Taxonomy" id="456481"/>
    <lineage>
        <taxon>Bacteria</taxon>
        <taxon>Pseudomonadati</taxon>
        <taxon>Spirochaetota</taxon>
        <taxon>Spirochaetia</taxon>
        <taxon>Leptospirales</taxon>
        <taxon>Leptospiraceae</taxon>
        <taxon>Leptospira</taxon>
    </lineage>
</organism>
<gene>
    <name evidence="1" type="primary">rplT</name>
    <name type="ordered locus">LEPBI_I2398</name>
</gene>
<protein>
    <recommendedName>
        <fullName evidence="1">Large ribosomal subunit protein bL20</fullName>
    </recommendedName>
    <alternativeName>
        <fullName evidence="2">50S ribosomal protein L20</fullName>
    </alternativeName>
</protein>
<proteinExistence type="inferred from homology"/>
<sequence>MPRAVNGTIHKNRRKKVLAKAKGFRGGRSKLFRTAKSAVMKAGQWAYRDRRKKKSEFRKLWITRINAAVRENGMSYSKFIHALKTHGINLDRKTLADLAYNHKEVFNAIVEKTKVAK</sequence>
<keyword id="KW-1185">Reference proteome</keyword>
<keyword id="KW-0687">Ribonucleoprotein</keyword>
<keyword id="KW-0689">Ribosomal protein</keyword>
<keyword id="KW-0694">RNA-binding</keyword>
<keyword id="KW-0699">rRNA-binding</keyword>
<dbReference type="EMBL" id="CP000786">
    <property type="protein sequence ID" value="ABZ98488.1"/>
    <property type="molecule type" value="Genomic_DNA"/>
</dbReference>
<dbReference type="RefSeq" id="WP_002975326.1">
    <property type="nucleotide sequence ID" value="NC_010602.1"/>
</dbReference>
<dbReference type="SMR" id="B0SKZ5"/>
<dbReference type="STRING" id="456481.LEPBI_I2398"/>
<dbReference type="GeneID" id="79828684"/>
<dbReference type="KEGG" id="lbi:LEPBI_I2398"/>
<dbReference type="HOGENOM" id="CLU_123265_0_1_12"/>
<dbReference type="OrthoDB" id="9808966at2"/>
<dbReference type="BioCyc" id="LBIF456481:LEPBI_RS11840-MONOMER"/>
<dbReference type="Proteomes" id="UP000001847">
    <property type="component" value="Chromosome I"/>
</dbReference>
<dbReference type="GO" id="GO:1990904">
    <property type="term" value="C:ribonucleoprotein complex"/>
    <property type="evidence" value="ECO:0007669"/>
    <property type="project" value="UniProtKB-KW"/>
</dbReference>
<dbReference type="GO" id="GO:0005840">
    <property type="term" value="C:ribosome"/>
    <property type="evidence" value="ECO:0007669"/>
    <property type="project" value="UniProtKB-KW"/>
</dbReference>
<dbReference type="GO" id="GO:0019843">
    <property type="term" value="F:rRNA binding"/>
    <property type="evidence" value="ECO:0007669"/>
    <property type="project" value="UniProtKB-UniRule"/>
</dbReference>
<dbReference type="GO" id="GO:0003735">
    <property type="term" value="F:structural constituent of ribosome"/>
    <property type="evidence" value="ECO:0007669"/>
    <property type="project" value="InterPro"/>
</dbReference>
<dbReference type="GO" id="GO:0000027">
    <property type="term" value="P:ribosomal large subunit assembly"/>
    <property type="evidence" value="ECO:0007669"/>
    <property type="project" value="UniProtKB-UniRule"/>
</dbReference>
<dbReference type="GO" id="GO:0006412">
    <property type="term" value="P:translation"/>
    <property type="evidence" value="ECO:0007669"/>
    <property type="project" value="InterPro"/>
</dbReference>
<dbReference type="CDD" id="cd07026">
    <property type="entry name" value="Ribosomal_L20"/>
    <property type="match status" value="1"/>
</dbReference>
<dbReference type="FunFam" id="1.10.1900.20:FF:000001">
    <property type="entry name" value="50S ribosomal protein L20"/>
    <property type="match status" value="1"/>
</dbReference>
<dbReference type="Gene3D" id="6.10.160.10">
    <property type="match status" value="1"/>
</dbReference>
<dbReference type="Gene3D" id="1.10.1900.20">
    <property type="entry name" value="Ribosomal protein L20"/>
    <property type="match status" value="1"/>
</dbReference>
<dbReference type="HAMAP" id="MF_00382">
    <property type="entry name" value="Ribosomal_bL20"/>
    <property type="match status" value="1"/>
</dbReference>
<dbReference type="InterPro" id="IPR005813">
    <property type="entry name" value="Ribosomal_bL20"/>
</dbReference>
<dbReference type="InterPro" id="IPR049946">
    <property type="entry name" value="RIBOSOMAL_L20_CS"/>
</dbReference>
<dbReference type="InterPro" id="IPR035566">
    <property type="entry name" value="Ribosomal_protein_bL20_C"/>
</dbReference>
<dbReference type="NCBIfam" id="TIGR01032">
    <property type="entry name" value="rplT_bact"/>
    <property type="match status" value="1"/>
</dbReference>
<dbReference type="PANTHER" id="PTHR10986">
    <property type="entry name" value="39S RIBOSOMAL PROTEIN L20"/>
    <property type="match status" value="1"/>
</dbReference>
<dbReference type="Pfam" id="PF00453">
    <property type="entry name" value="Ribosomal_L20"/>
    <property type="match status" value="1"/>
</dbReference>
<dbReference type="PRINTS" id="PR00062">
    <property type="entry name" value="RIBOSOMALL20"/>
</dbReference>
<dbReference type="SUPFAM" id="SSF74731">
    <property type="entry name" value="Ribosomal protein L20"/>
    <property type="match status" value="1"/>
</dbReference>
<dbReference type="PROSITE" id="PS00937">
    <property type="entry name" value="RIBOSOMAL_L20"/>
    <property type="match status" value="1"/>
</dbReference>
<comment type="function">
    <text evidence="1">Binds directly to 23S ribosomal RNA and is necessary for the in vitro assembly process of the 50S ribosomal subunit. It is not involved in the protein synthesizing functions of that subunit.</text>
</comment>
<comment type="similarity">
    <text evidence="1">Belongs to the bacterial ribosomal protein bL20 family.</text>
</comment>
<reference key="1">
    <citation type="journal article" date="2008" name="PLoS ONE">
        <title>Genome sequence of the saprophyte Leptospira biflexa provides insights into the evolution of Leptospira and the pathogenesis of leptospirosis.</title>
        <authorList>
            <person name="Picardeau M."/>
            <person name="Bulach D.M."/>
            <person name="Bouchier C."/>
            <person name="Zuerner R.L."/>
            <person name="Zidane N."/>
            <person name="Wilson P.J."/>
            <person name="Creno S."/>
            <person name="Kuczek E.S."/>
            <person name="Bommezzadri S."/>
            <person name="Davis J.C."/>
            <person name="McGrath A."/>
            <person name="Johnson M.J."/>
            <person name="Boursaux-Eude C."/>
            <person name="Seemann T."/>
            <person name="Rouy Z."/>
            <person name="Coppel R.L."/>
            <person name="Rood J.I."/>
            <person name="Lajus A."/>
            <person name="Davies J.K."/>
            <person name="Medigue C."/>
            <person name="Adler B."/>
        </authorList>
    </citation>
    <scope>NUCLEOTIDE SEQUENCE [LARGE SCALE GENOMIC DNA]</scope>
    <source>
        <strain>Patoc 1 / ATCC 23582 / Paris</strain>
    </source>
</reference>